<keyword id="KW-0963">Cytoplasm</keyword>
<keyword id="KW-0227">DNA damage</keyword>
<keyword id="KW-0228">DNA excision</keyword>
<keyword id="KW-0234">DNA repair</keyword>
<keyword id="KW-0267">Excision nuclease</keyword>
<keyword id="KW-0742">SOS response</keyword>
<reference key="1">
    <citation type="journal article" date="2006" name="Proc. Natl. Acad. Sci. U.S.A.">
        <title>Comparative genomics of the lactic acid bacteria.</title>
        <authorList>
            <person name="Makarova K.S."/>
            <person name="Slesarev A."/>
            <person name="Wolf Y.I."/>
            <person name="Sorokin A."/>
            <person name="Mirkin B."/>
            <person name="Koonin E.V."/>
            <person name="Pavlov A."/>
            <person name="Pavlova N."/>
            <person name="Karamychev V."/>
            <person name="Polouchine N."/>
            <person name="Shakhova V."/>
            <person name="Grigoriev I."/>
            <person name="Lou Y."/>
            <person name="Rohksar D."/>
            <person name="Lucas S."/>
            <person name="Huang K."/>
            <person name="Goodstein D.M."/>
            <person name="Hawkins T."/>
            <person name="Plengvidhya V."/>
            <person name="Welker D."/>
            <person name="Hughes J."/>
            <person name="Goh Y."/>
            <person name="Benson A."/>
            <person name="Baldwin K."/>
            <person name="Lee J.-H."/>
            <person name="Diaz-Muniz I."/>
            <person name="Dosti B."/>
            <person name="Smeianov V."/>
            <person name="Wechter W."/>
            <person name="Barabote R."/>
            <person name="Lorca G."/>
            <person name="Altermann E."/>
            <person name="Barrangou R."/>
            <person name="Ganesan B."/>
            <person name="Xie Y."/>
            <person name="Rawsthorne H."/>
            <person name="Tamir D."/>
            <person name="Parker C."/>
            <person name="Breidt F."/>
            <person name="Broadbent J.R."/>
            <person name="Hutkins R."/>
            <person name="O'Sullivan D."/>
            <person name="Steele J."/>
            <person name="Unlu G."/>
            <person name="Saier M.H. Jr."/>
            <person name="Klaenhammer T."/>
            <person name="Richardson P."/>
            <person name="Kozyavkin S."/>
            <person name="Weimer B.C."/>
            <person name="Mills D.A."/>
        </authorList>
    </citation>
    <scope>NUCLEOTIDE SEQUENCE [LARGE SCALE GENOMIC DNA]</scope>
    <source>
        <strain>ATCC 25745 / CCUG 21536 / LMG 10740 / 183-1w</strain>
    </source>
</reference>
<accession>Q03F33</accession>
<feature type="chain" id="PRO_1000077816" description="UvrABC system protein C">
    <location>
        <begin position="1"/>
        <end position="594"/>
    </location>
</feature>
<feature type="domain" description="GIY-YIG" evidence="1">
    <location>
        <begin position="15"/>
        <end position="92"/>
    </location>
</feature>
<feature type="domain" description="UVR" evidence="1">
    <location>
        <begin position="197"/>
        <end position="232"/>
    </location>
</feature>
<evidence type="ECO:0000255" key="1">
    <source>
        <dbReference type="HAMAP-Rule" id="MF_00203"/>
    </source>
</evidence>
<name>UVRC_PEDPA</name>
<dbReference type="EMBL" id="CP000422">
    <property type="protein sequence ID" value="ABJ68189.1"/>
    <property type="molecule type" value="Genomic_DNA"/>
</dbReference>
<dbReference type="RefSeq" id="WP_011673514.1">
    <property type="nucleotide sequence ID" value="NC_008525.1"/>
</dbReference>
<dbReference type="SMR" id="Q03F33"/>
<dbReference type="STRING" id="278197.PEPE_1135"/>
<dbReference type="GeneID" id="33062477"/>
<dbReference type="KEGG" id="ppe:PEPE_1135"/>
<dbReference type="eggNOG" id="COG0322">
    <property type="taxonomic scope" value="Bacteria"/>
</dbReference>
<dbReference type="HOGENOM" id="CLU_014841_3_2_9"/>
<dbReference type="OrthoDB" id="9804933at2"/>
<dbReference type="Proteomes" id="UP000000773">
    <property type="component" value="Chromosome"/>
</dbReference>
<dbReference type="GO" id="GO:0005737">
    <property type="term" value="C:cytoplasm"/>
    <property type="evidence" value="ECO:0007669"/>
    <property type="project" value="UniProtKB-SubCell"/>
</dbReference>
<dbReference type="GO" id="GO:0009380">
    <property type="term" value="C:excinuclease repair complex"/>
    <property type="evidence" value="ECO:0007669"/>
    <property type="project" value="InterPro"/>
</dbReference>
<dbReference type="GO" id="GO:0003677">
    <property type="term" value="F:DNA binding"/>
    <property type="evidence" value="ECO:0007669"/>
    <property type="project" value="UniProtKB-UniRule"/>
</dbReference>
<dbReference type="GO" id="GO:0009381">
    <property type="term" value="F:excinuclease ABC activity"/>
    <property type="evidence" value="ECO:0007669"/>
    <property type="project" value="UniProtKB-UniRule"/>
</dbReference>
<dbReference type="GO" id="GO:0006289">
    <property type="term" value="P:nucleotide-excision repair"/>
    <property type="evidence" value="ECO:0007669"/>
    <property type="project" value="UniProtKB-UniRule"/>
</dbReference>
<dbReference type="GO" id="GO:0009432">
    <property type="term" value="P:SOS response"/>
    <property type="evidence" value="ECO:0007669"/>
    <property type="project" value="UniProtKB-UniRule"/>
</dbReference>
<dbReference type="CDD" id="cd10434">
    <property type="entry name" value="GIY-YIG_UvrC_Cho"/>
    <property type="match status" value="1"/>
</dbReference>
<dbReference type="FunFam" id="3.30.420.340:FF:000002">
    <property type="entry name" value="UvrABC system protein C"/>
    <property type="match status" value="1"/>
</dbReference>
<dbReference type="FunFam" id="3.40.1440.10:FF:000001">
    <property type="entry name" value="UvrABC system protein C"/>
    <property type="match status" value="1"/>
</dbReference>
<dbReference type="Gene3D" id="1.10.150.20">
    <property type="entry name" value="5' to 3' exonuclease, C-terminal subdomain"/>
    <property type="match status" value="1"/>
</dbReference>
<dbReference type="Gene3D" id="3.40.1440.10">
    <property type="entry name" value="GIY-YIG endonuclease"/>
    <property type="match status" value="1"/>
</dbReference>
<dbReference type="Gene3D" id="4.10.860.10">
    <property type="entry name" value="UVR domain"/>
    <property type="match status" value="1"/>
</dbReference>
<dbReference type="Gene3D" id="3.30.420.340">
    <property type="entry name" value="UvrC, RNAse H endonuclease domain"/>
    <property type="match status" value="1"/>
</dbReference>
<dbReference type="HAMAP" id="MF_00203">
    <property type="entry name" value="UvrC"/>
    <property type="match status" value="1"/>
</dbReference>
<dbReference type="InterPro" id="IPR000305">
    <property type="entry name" value="GIY-YIG_endonuc"/>
</dbReference>
<dbReference type="InterPro" id="IPR035901">
    <property type="entry name" value="GIY-YIG_endonuc_sf"/>
</dbReference>
<dbReference type="InterPro" id="IPR047296">
    <property type="entry name" value="GIY-YIG_UvrC_Cho"/>
</dbReference>
<dbReference type="InterPro" id="IPR010994">
    <property type="entry name" value="RuvA_2-like"/>
</dbReference>
<dbReference type="InterPro" id="IPR001943">
    <property type="entry name" value="UVR_dom"/>
</dbReference>
<dbReference type="InterPro" id="IPR036876">
    <property type="entry name" value="UVR_dom_sf"/>
</dbReference>
<dbReference type="InterPro" id="IPR050066">
    <property type="entry name" value="UvrABC_protein_C"/>
</dbReference>
<dbReference type="InterPro" id="IPR004791">
    <property type="entry name" value="UvrC"/>
</dbReference>
<dbReference type="InterPro" id="IPR001162">
    <property type="entry name" value="UvrC_RNase_H_dom"/>
</dbReference>
<dbReference type="InterPro" id="IPR038476">
    <property type="entry name" value="UvrC_RNase_H_dom_sf"/>
</dbReference>
<dbReference type="NCBIfam" id="TIGR00194">
    <property type="entry name" value="uvrC"/>
    <property type="match status" value="1"/>
</dbReference>
<dbReference type="PANTHER" id="PTHR30562:SF1">
    <property type="entry name" value="UVRABC SYSTEM PROTEIN C"/>
    <property type="match status" value="1"/>
</dbReference>
<dbReference type="PANTHER" id="PTHR30562">
    <property type="entry name" value="UVRC/OXIDOREDUCTASE"/>
    <property type="match status" value="1"/>
</dbReference>
<dbReference type="Pfam" id="PF01541">
    <property type="entry name" value="GIY-YIG"/>
    <property type="match status" value="1"/>
</dbReference>
<dbReference type="Pfam" id="PF14520">
    <property type="entry name" value="HHH_5"/>
    <property type="match status" value="1"/>
</dbReference>
<dbReference type="Pfam" id="PF02151">
    <property type="entry name" value="UVR"/>
    <property type="match status" value="1"/>
</dbReference>
<dbReference type="Pfam" id="PF22920">
    <property type="entry name" value="UvrC_RNaseH"/>
    <property type="match status" value="1"/>
</dbReference>
<dbReference type="Pfam" id="PF08459">
    <property type="entry name" value="UvrC_RNaseH_dom"/>
    <property type="match status" value="1"/>
</dbReference>
<dbReference type="SMART" id="SM00465">
    <property type="entry name" value="GIYc"/>
    <property type="match status" value="1"/>
</dbReference>
<dbReference type="SUPFAM" id="SSF46600">
    <property type="entry name" value="C-terminal UvrC-binding domain of UvrB"/>
    <property type="match status" value="1"/>
</dbReference>
<dbReference type="SUPFAM" id="SSF82771">
    <property type="entry name" value="GIY-YIG endonuclease"/>
    <property type="match status" value="1"/>
</dbReference>
<dbReference type="SUPFAM" id="SSF47781">
    <property type="entry name" value="RuvA domain 2-like"/>
    <property type="match status" value="1"/>
</dbReference>
<dbReference type="PROSITE" id="PS50164">
    <property type="entry name" value="GIY_YIG"/>
    <property type="match status" value="1"/>
</dbReference>
<dbReference type="PROSITE" id="PS50151">
    <property type="entry name" value="UVR"/>
    <property type="match status" value="1"/>
</dbReference>
<dbReference type="PROSITE" id="PS50165">
    <property type="entry name" value="UVRC"/>
    <property type="match status" value="1"/>
</dbReference>
<protein>
    <recommendedName>
        <fullName evidence="1">UvrABC system protein C</fullName>
        <shortName evidence="1">Protein UvrC</shortName>
    </recommendedName>
    <alternativeName>
        <fullName evidence="1">Excinuclease ABC subunit C</fullName>
    </alternativeName>
</protein>
<comment type="function">
    <text evidence="1">The UvrABC repair system catalyzes the recognition and processing of DNA lesions. UvrC both incises the 5' and 3' sides of the lesion. The N-terminal half is responsible for the 3' incision and the C-terminal half is responsible for the 5' incision.</text>
</comment>
<comment type="subunit">
    <text evidence="1">Interacts with UvrB in an incision complex.</text>
</comment>
<comment type="subcellular location">
    <subcellularLocation>
        <location evidence="1">Cytoplasm</location>
    </subcellularLocation>
</comment>
<comment type="similarity">
    <text evidence="1">Belongs to the UvrC family.</text>
</comment>
<organism>
    <name type="scientific">Pediococcus pentosaceus (strain ATCC 25745 / CCUG 21536 / LMG 10740 / 183-1w)</name>
    <dbReference type="NCBI Taxonomy" id="278197"/>
    <lineage>
        <taxon>Bacteria</taxon>
        <taxon>Bacillati</taxon>
        <taxon>Bacillota</taxon>
        <taxon>Bacilli</taxon>
        <taxon>Lactobacillales</taxon>
        <taxon>Lactobacillaceae</taxon>
        <taxon>Pediococcus</taxon>
    </lineage>
</organism>
<gene>
    <name evidence="1" type="primary">uvrC</name>
    <name type="ordered locus">PEPE_1135</name>
</gene>
<proteinExistence type="inferred from homology"/>
<sequence length="594" mass="68086">MASEHIEHKLALLPDKPGCYQMKNLNSQIIYVGKAKNLKNRVRSYFKSSHEGKTAKLVSEIADFDYIVTSSDKEAFLLEITLIQKFQPYYNIKLKKGTGYPYIKITNEKDPRMEIVSSVRRDGGFYFGPYPNVYAAEETLHFLEKVYPLRRCNGFQGRPCLYYHMGQCLGACFQEVPKEEYDQQIAKIKSFLRGNVAKIKQSLQTKMQKASEAMEFERAADIRDQIHYIEVTVEKQKIISNDSTPRDLFNFYLDKGWLSIQIFFIRQSRLIKREKRLFPIATDVNDELSSFILQFYNNKNKVLPNEILVPSGLDNKIMAEILGVPVRTPQRGEKKNLLELAKENAQITLEEKFRLMELDESKTTGAMKEITDALGIPEGHRIEAFDHSHIQGSELVSAMVVFTDGKPDKKMYRKFKLNTVDHADEAASTREVIRRRYVRLLKEKQSLPDLILMDGGDIQLNAAKDVLVNELSLHIPVAGMVKNDKHKTSDLIFGSQDQRVQLDPKSQGFYLVQRIQDEVHRFAITFHRQLHAKNSLASQLDLIQGVGPKTRNKLLKSFGSLNKIRDANLKEIEELGIPEKVAKTIKVSLSVHGK</sequence>